<proteinExistence type="inferred from homology"/>
<accession>Q8CRP5</accession>
<organism>
    <name type="scientific">Staphylococcus epidermidis (strain ATCC 12228 / FDA PCI 1200)</name>
    <dbReference type="NCBI Taxonomy" id="176280"/>
    <lineage>
        <taxon>Bacteria</taxon>
        <taxon>Bacillati</taxon>
        <taxon>Bacillota</taxon>
        <taxon>Bacilli</taxon>
        <taxon>Bacillales</taxon>
        <taxon>Staphylococcaceae</taxon>
        <taxon>Staphylococcus</taxon>
    </lineage>
</organism>
<feature type="chain" id="PRO_0000177880" description="D-alanine--D-alanine ligase">
    <location>
        <begin position="1"/>
        <end position="357"/>
    </location>
</feature>
<feature type="domain" description="ATP-grasp" evidence="2">
    <location>
        <begin position="134"/>
        <end position="339"/>
    </location>
</feature>
<feature type="binding site" evidence="2">
    <location>
        <begin position="167"/>
        <end position="222"/>
    </location>
    <ligand>
        <name>ATP</name>
        <dbReference type="ChEBI" id="CHEBI:30616"/>
    </ligand>
</feature>
<feature type="binding site" evidence="2">
    <location>
        <position position="293"/>
    </location>
    <ligand>
        <name>Mg(2+)</name>
        <dbReference type="ChEBI" id="CHEBI:18420"/>
        <label>1</label>
    </ligand>
</feature>
<feature type="binding site" evidence="2">
    <location>
        <position position="306"/>
    </location>
    <ligand>
        <name>Mg(2+)</name>
        <dbReference type="ChEBI" id="CHEBI:18420"/>
        <label>1</label>
    </ligand>
</feature>
<feature type="binding site" evidence="2">
    <location>
        <position position="306"/>
    </location>
    <ligand>
        <name>Mg(2+)</name>
        <dbReference type="ChEBI" id="CHEBI:18420"/>
        <label>2</label>
    </ligand>
</feature>
<feature type="binding site" evidence="2">
    <location>
        <position position="308"/>
    </location>
    <ligand>
        <name>Mg(2+)</name>
        <dbReference type="ChEBI" id="CHEBI:18420"/>
        <label>2</label>
    </ligand>
</feature>
<protein>
    <recommendedName>
        <fullName evidence="2">D-alanine--D-alanine ligase</fullName>
        <ecNumber evidence="2">6.3.2.4</ecNumber>
    </recommendedName>
    <alternativeName>
        <fullName evidence="2">D-Ala-D-Ala ligase</fullName>
    </alternativeName>
    <alternativeName>
        <fullName evidence="2">D-alanylalanine synthetase</fullName>
    </alternativeName>
</protein>
<name>DDL_STAES</name>
<keyword id="KW-0067">ATP-binding</keyword>
<keyword id="KW-0133">Cell shape</keyword>
<keyword id="KW-0961">Cell wall biogenesis/degradation</keyword>
<keyword id="KW-0963">Cytoplasm</keyword>
<keyword id="KW-0436">Ligase</keyword>
<keyword id="KW-0460">Magnesium</keyword>
<keyword id="KW-0464">Manganese</keyword>
<keyword id="KW-0479">Metal-binding</keyword>
<keyword id="KW-0547">Nucleotide-binding</keyword>
<keyword id="KW-0573">Peptidoglycan synthesis</keyword>
<evidence type="ECO:0000250" key="1"/>
<evidence type="ECO:0000255" key="2">
    <source>
        <dbReference type="HAMAP-Rule" id="MF_00047"/>
    </source>
</evidence>
<dbReference type="EC" id="6.3.2.4" evidence="2"/>
<dbReference type="EMBL" id="AE015929">
    <property type="protein sequence ID" value="AAO05280.1"/>
    <property type="molecule type" value="Genomic_DNA"/>
</dbReference>
<dbReference type="RefSeq" id="NP_765236.1">
    <property type="nucleotide sequence ID" value="NC_004461.1"/>
</dbReference>
<dbReference type="RefSeq" id="WP_002468311.1">
    <property type="nucleotide sequence ID" value="NZ_WBME01000021.1"/>
</dbReference>
<dbReference type="SMR" id="Q8CRP5"/>
<dbReference type="KEGG" id="sep:SE_1681"/>
<dbReference type="PATRIC" id="fig|176280.10.peg.1642"/>
<dbReference type="eggNOG" id="COG1181">
    <property type="taxonomic scope" value="Bacteria"/>
</dbReference>
<dbReference type="HOGENOM" id="CLU_039268_0_0_9"/>
<dbReference type="OrthoDB" id="9813261at2"/>
<dbReference type="UniPathway" id="UPA00219"/>
<dbReference type="Proteomes" id="UP000001411">
    <property type="component" value="Chromosome"/>
</dbReference>
<dbReference type="GO" id="GO:0005829">
    <property type="term" value="C:cytosol"/>
    <property type="evidence" value="ECO:0007669"/>
    <property type="project" value="TreeGrafter"/>
</dbReference>
<dbReference type="GO" id="GO:0005524">
    <property type="term" value="F:ATP binding"/>
    <property type="evidence" value="ECO:0007669"/>
    <property type="project" value="UniProtKB-KW"/>
</dbReference>
<dbReference type="GO" id="GO:0008716">
    <property type="term" value="F:D-alanine-D-alanine ligase activity"/>
    <property type="evidence" value="ECO:0007669"/>
    <property type="project" value="UniProtKB-UniRule"/>
</dbReference>
<dbReference type="GO" id="GO:0046872">
    <property type="term" value="F:metal ion binding"/>
    <property type="evidence" value="ECO:0007669"/>
    <property type="project" value="UniProtKB-KW"/>
</dbReference>
<dbReference type="GO" id="GO:0071555">
    <property type="term" value="P:cell wall organization"/>
    <property type="evidence" value="ECO:0007669"/>
    <property type="project" value="UniProtKB-KW"/>
</dbReference>
<dbReference type="GO" id="GO:0009252">
    <property type="term" value="P:peptidoglycan biosynthetic process"/>
    <property type="evidence" value="ECO:0007669"/>
    <property type="project" value="UniProtKB-UniRule"/>
</dbReference>
<dbReference type="GO" id="GO:0008360">
    <property type="term" value="P:regulation of cell shape"/>
    <property type="evidence" value="ECO:0007669"/>
    <property type="project" value="UniProtKB-KW"/>
</dbReference>
<dbReference type="FunFam" id="3.30.1490.20:FF:000007">
    <property type="entry name" value="D-alanine--D-alanine ligase"/>
    <property type="match status" value="1"/>
</dbReference>
<dbReference type="FunFam" id="3.30.470.20:FF:000008">
    <property type="entry name" value="D-alanine--D-alanine ligase"/>
    <property type="match status" value="1"/>
</dbReference>
<dbReference type="Gene3D" id="3.40.50.20">
    <property type="match status" value="1"/>
</dbReference>
<dbReference type="Gene3D" id="3.30.1490.20">
    <property type="entry name" value="ATP-grasp fold, A domain"/>
    <property type="match status" value="1"/>
</dbReference>
<dbReference type="Gene3D" id="3.30.470.20">
    <property type="entry name" value="ATP-grasp fold, B domain"/>
    <property type="match status" value="1"/>
</dbReference>
<dbReference type="HAMAP" id="MF_00047">
    <property type="entry name" value="Dala_Dala_lig"/>
    <property type="match status" value="1"/>
</dbReference>
<dbReference type="InterPro" id="IPR011761">
    <property type="entry name" value="ATP-grasp"/>
</dbReference>
<dbReference type="InterPro" id="IPR013815">
    <property type="entry name" value="ATP_grasp_subdomain_1"/>
</dbReference>
<dbReference type="InterPro" id="IPR000291">
    <property type="entry name" value="D-Ala_lig_Van_CS"/>
</dbReference>
<dbReference type="InterPro" id="IPR005905">
    <property type="entry name" value="D_ala_D_ala"/>
</dbReference>
<dbReference type="InterPro" id="IPR011095">
    <property type="entry name" value="Dala_Dala_lig_C"/>
</dbReference>
<dbReference type="InterPro" id="IPR011127">
    <property type="entry name" value="Dala_Dala_lig_N"/>
</dbReference>
<dbReference type="InterPro" id="IPR016185">
    <property type="entry name" value="PreATP-grasp_dom_sf"/>
</dbReference>
<dbReference type="NCBIfam" id="TIGR01205">
    <property type="entry name" value="D_ala_D_alaTIGR"/>
    <property type="match status" value="1"/>
</dbReference>
<dbReference type="NCBIfam" id="NF002526">
    <property type="entry name" value="PRK01966.1-2"/>
    <property type="match status" value="1"/>
</dbReference>
<dbReference type="NCBIfam" id="NF002528">
    <property type="entry name" value="PRK01966.1-4"/>
    <property type="match status" value="1"/>
</dbReference>
<dbReference type="PANTHER" id="PTHR23132">
    <property type="entry name" value="D-ALANINE--D-ALANINE LIGASE"/>
    <property type="match status" value="1"/>
</dbReference>
<dbReference type="PANTHER" id="PTHR23132:SF25">
    <property type="entry name" value="D-ALANINE--D-ALANINE LIGASE A"/>
    <property type="match status" value="1"/>
</dbReference>
<dbReference type="Pfam" id="PF07478">
    <property type="entry name" value="Dala_Dala_lig_C"/>
    <property type="match status" value="1"/>
</dbReference>
<dbReference type="Pfam" id="PF01820">
    <property type="entry name" value="Dala_Dala_lig_N"/>
    <property type="match status" value="1"/>
</dbReference>
<dbReference type="PIRSF" id="PIRSF039102">
    <property type="entry name" value="Ddl/VanB"/>
    <property type="match status" value="1"/>
</dbReference>
<dbReference type="SUPFAM" id="SSF56059">
    <property type="entry name" value="Glutathione synthetase ATP-binding domain-like"/>
    <property type="match status" value="1"/>
</dbReference>
<dbReference type="SUPFAM" id="SSF52440">
    <property type="entry name" value="PreATP-grasp domain"/>
    <property type="match status" value="1"/>
</dbReference>
<dbReference type="PROSITE" id="PS50975">
    <property type="entry name" value="ATP_GRASP"/>
    <property type="match status" value="1"/>
</dbReference>
<dbReference type="PROSITE" id="PS00843">
    <property type="entry name" value="DALA_DALA_LIGASE_1"/>
    <property type="match status" value="1"/>
</dbReference>
<dbReference type="PROSITE" id="PS00844">
    <property type="entry name" value="DALA_DALA_LIGASE_2"/>
    <property type="match status" value="1"/>
</dbReference>
<comment type="function">
    <text evidence="2">Cell wall formation.</text>
</comment>
<comment type="catalytic activity">
    <reaction evidence="2">
        <text>2 D-alanine + ATP = D-alanyl-D-alanine + ADP + phosphate + H(+)</text>
        <dbReference type="Rhea" id="RHEA:11224"/>
        <dbReference type="ChEBI" id="CHEBI:15378"/>
        <dbReference type="ChEBI" id="CHEBI:30616"/>
        <dbReference type="ChEBI" id="CHEBI:43474"/>
        <dbReference type="ChEBI" id="CHEBI:57416"/>
        <dbReference type="ChEBI" id="CHEBI:57822"/>
        <dbReference type="ChEBI" id="CHEBI:456216"/>
        <dbReference type="EC" id="6.3.2.4"/>
    </reaction>
</comment>
<comment type="cofactor">
    <cofactor evidence="1">
        <name>Mg(2+)</name>
        <dbReference type="ChEBI" id="CHEBI:18420"/>
    </cofactor>
    <cofactor evidence="1">
        <name>Mn(2+)</name>
        <dbReference type="ChEBI" id="CHEBI:29035"/>
    </cofactor>
    <text evidence="1">Binds 2 magnesium or manganese ions per subunit.</text>
</comment>
<comment type="pathway">
    <text evidence="2">Cell wall biogenesis; peptidoglycan biosynthesis.</text>
</comment>
<comment type="subcellular location">
    <subcellularLocation>
        <location evidence="2">Cytoplasm</location>
    </subcellularLocation>
</comment>
<comment type="similarity">
    <text evidence="2">Belongs to the D-alanine--D-alanine ligase family.</text>
</comment>
<gene>
    <name evidence="2" type="primary">ddl</name>
    <name type="ordered locus">SE_1681</name>
</gene>
<reference key="1">
    <citation type="journal article" date="2003" name="Mol. Microbiol.">
        <title>Genome-based analysis of virulence genes in a non-biofilm-forming Staphylococcus epidermidis strain (ATCC 12228).</title>
        <authorList>
            <person name="Zhang Y.-Q."/>
            <person name="Ren S.-X."/>
            <person name="Li H.-L."/>
            <person name="Wang Y.-X."/>
            <person name="Fu G."/>
            <person name="Yang J."/>
            <person name="Qin Z.-Q."/>
            <person name="Miao Y.-G."/>
            <person name="Wang W.-Y."/>
            <person name="Chen R.-S."/>
            <person name="Shen Y."/>
            <person name="Chen Z."/>
            <person name="Yuan Z.-H."/>
            <person name="Zhao G.-P."/>
            <person name="Qu D."/>
            <person name="Danchin A."/>
            <person name="Wen Y.-M."/>
        </authorList>
    </citation>
    <scope>NUCLEOTIDE SEQUENCE [LARGE SCALE GENOMIC DNA]</scope>
    <source>
        <strain>ATCC 12228 / FDA PCI 1200</strain>
    </source>
</reference>
<sequence length="357" mass="40405">MTKENICIVFGGKSAEHDVSILTAQNVLNAIDKERYQVDIIYITNDGEWKKKDNITQEIKNTDELVINDVETGEISQLLSKGSLGKSYDAVFPLLHGPNGEDGTIQGLFEVLDIPYVGNGVLAASSSMDKLVMKQLFEHRGLPQLPYISFLRSEYEKYENNIIKLVNDKLTYPVFVKPANLGSSVGISKCNNEEELKSGITEAFQFDRKLVIEQGINAREIEVAVLGNDYPETTWPGEVVKDVAFYDYKSKYKDGKIRLDIPADLDQDVQMTLRNMALEAFKATDCSGLVRADFFVTDDNQIYINETNAMPGFTAYSMYPNLWKNMGLSYPDLIAKLIDLAKERYEDKKKNKYKIDY</sequence>